<dbReference type="EMBL" id="AJ965256">
    <property type="protein sequence ID" value="CAI82886.1"/>
    <property type="molecule type" value="Genomic_DNA"/>
</dbReference>
<dbReference type="RefSeq" id="WP_011309237.1">
    <property type="nucleotide sequence ID" value="NC_007356.1"/>
</dbReference>
<dbReference type="SMR" id="Q3ZXB7"/>
<dbReference type="KEGG" id="deh:cbdbA724"/>
<dbReference type="HOGENOM" id="CLU_169643_4_1_0"/>
<dbReference type="Proteomes" id="UP000000433">
    <property type="component" value="Chromosome"/>
</dbReference>
<dbReference type="GO" id="GO:0022625">
    <property type="term" value="C:cytosolic large ribosomal subunit"/>
    <property type="evidence" value="ECO:0007669"/>
    <property type="project" value="TreeGrafter"/>
</dbReference>
<dbReference type="GO" id="GO:0003735">
    <property type="term" value="F:structural constituent of ribosome"/>
    <property type="evidence" value="ECO:0007669"/>
    <property type="project" value="InterPro"/>
</dbReference>
<dbReference type="GO" id="GO:0006412">
    <property type="term" value="P:translation"/>
    <property type="evidence" value="ECO:0007669"/>
    <property type="project" value="UniProtKB-UniRule"/>
</dbReference>
<dbReference type="FunFam" id="4.10.410.60:FF:000001">
    <property type="entry name" value="50S ribosomal protein L35"/>
    <property type="match status" value="1"/>
</dbReference>
<dbReference type="Gene3D" id="4.10.410.60">
    <property type="match status" value="1"/>
</dbReference>
<dbReference type="HAMAP" id="MF_00514">
    <property type="entry name" value="Ribosomal_bL35"/>
    <property type="match status" value="1"/>
</dbReference>
<dbReference type="InterPro" id="IPR001706">
    <property type="entry name" value="Ribosomal_bL35"/>
</dbReference>
<dbReference type="InterPro" id="IPR021137">
    <property type="entry name" value="Ribosomal_bL35-like"/>
</dbReference>
<dbReference type="InterPro" id="IPR037229">
    <property type="entry name" value="Ribosomal_bL35_sf"/>
</dbReference>
<dbReference type="NCBIfam" id="TIGR00001">
    <property type="entry name" value="rpmI_bact"/>
    <property type="match status" value="1"/>
</dbReference>
<dbReference type="PANTHER" id="PTHR33343">
    <property type="entry name" value="54S RIBOSOMAL PROTEIN BL35M"/>
    <property type="match status" value="1"/>
</dbReference>
<dbReference type="PANTHER" id="PTHR33343:SF1">
    <property type="entry name" value="LARGE RIBOSOMAL SUBUNIT PROTEIN BL35M"/>
    <property type="match status" value="1"/>
</dbReference>
<dbReference type="Pfam" id="PF01632">
    <property type="entry name" value="Ribosomal_L35p"/>
    <property type="match status" value="1"/>
</dbReference>
<dbReference type="PRINTS" id="PR00064">
    <property type="entry name" value="RIBOSOMALL35"/>
</dbReference>
<dbReference type="SUPFAM" id="SSF143034">
    <property type="entry name" value="L35p-like"/>
    <property type="match status" value="1"/>
</dbReference>
<accession>Q3ZXB7</accession>
<comment type="similarity">
    <text evidence="1">Belongs to the bacterial ribosomal protein bL35 family.</text>
</comment>
<gene>
    <name evidence="1" type="primary">rpmI</name>
    <name type="ordered locus">cbdbA724</name>
</gene>
<protein>
    <recommendedName>
        <fullName evidence="1">Large ribosomal subunit protein bL35</fullName>
    </recommendedName>
    <alternativeName>
        <fullName evidence="2">50S ribosomal protein L35</fullName>
    </alternativeName>
</protein>
<organism>
    <name type="scientific">Dehalococcoides mccartyi (strain CBDB1)</name>
    <dbReference type="NCBI Taxonomy" id="255470"/>
    <lineage>
        <taxon>Bacteria</taxon>
        <taxon>Bacillati</taxon>
        <taxon>Chloroflexota</taxon>
        <taxon>Dehalococcoidia</taxon>
        <taxon>Dehalococcoidales</taxon>
        <taxon>Dehalococcoidaceae</taxon>
        <taxon>Dehalococcoides</taxon>
    </lineage>
</organism>
<feature type="chain" id="PRO_0000258668" description="Large ribosomal subunit protein bL35">
    <location>
        <begin position="1"/>
        <end position="67"/>
    </location>
</feature>
<name>RL35_DEHMC</name>
<reference key="1">
    <citation type="journal article" date="2005" name="Nat. Biotechnol.">
        <title>Genome sequence of the chlorinated compound-respiring bacterium Dehalococcoides species strain CBDB1.</title>
        <authorList>
            <person name="Kube M."/>
            <person name="Beck A."/>
            <person name="Zinder S.H."/>
            <person name="Kuhl H."/>
            <person name="Reinhardt R."/>
            <person name="Adrian L."/>
        </authorList>
    </citation>
    <scope>NUCLEOTIDE SEQUENCE [LARGE SCALE GENOMIC DNA]</scope>
    <source>
        <strain>CBDB1</strain>
    </source>
</reference>
<keyword id="KW-0687">Ribonucleoprotein</keyword>
<keyword id="KW-0689">Ribosomal protein</keyword>
<sequence>MPKMKTRKTAAKRFHVTGTGKIMRSKGMKSHLRRNKSARVLRQFDEMSQVAGVDRARIQKLIPYGVS</sequence>
<evidence type="ECO:0000255" key="1">
    <source>
        <dbReference type="HAMAP-Rule" id="MF_00514"/>
    </source>
</evidence>
<evidence type="ECO:0000305" key="2"/>
<proteinExistence type="inferred from homology"/>